<reference key="1">
    <citation type="journal article" date="2010" name="Genome Biol.">
        <title>Structure and dynamics of the pan-genome of Streptococcus pneumoniae and closely related species.</title>
        <authorList>
            <person name="Donati C."/>
            <person name="Hiller N.L."/>
            <person name="Tettelin H."/>
            <person name="Muzzi A."/>
            <person name="Croucher N.J."/>
            <person name="Angiuoli S.V."/>
            <person name="Oggioni M."/>
            <person name="Dunning Hotopp J.C."/>
            <person name="Hu F.Z."/>
            <person name="Riley D.R."/>
            <person name="Covacci A."/>
            <person name="Mitchell T.J."/>
            <person name="Bentley S.D."/>
            <person name="Kilian M."/>
            <person name="Ehrlich G.D."/>
            <person name="Rappuoli R."/>
            <person name="Moxon E.R."/>
            <person name="Masignani V."/>
        </authorList>
    </citation>
    <scope>NUCLEOTIDE SEQUENCE [LARGE SCALE GENOMIC DNA]</scope>
    <source>
        <strain>JJA</strain>
    </source>
</reference>
<feature type="chain" id="PRO_1000132892" description="V-type ATP synthase beta chain">
    <location>
        <begin position="1"/>
        <end position="461"/>
    </location>
</feature>
<proteinExistence type="inferred from homology"/>
<gene>
    <name evidence="1" type="primary">atpB</name>
    <name type="ordered locus">SPJ_1232</name>
</gene>
<organism>
    <name type="scientific">Streptococcus pneumoniae (strain JJA)</name>
    <dbReference type="NCBI Taxonomy" id="488222"/>
    <lineage>
        <taxon>Bacteria</taxon>
        <taxon>Bacillati</taxon>
        <taxon>Bacillota</taxon>
        <taxon>Bacilli</taxon>
        <taxon>Lactobacillales</taxon>
        <taxon>Streptococcaceae</taxon>
        <taxon>Streptococcus</taxon>
    </lineage>
</organism>
<protein>
    <recommendedName>
        <fullName evidence="1">V-type ATP synthase beta chain</fullName>
    </recommendedName>
    <alternativeName>
        <fullName evidence="1">V-ATPase subunit B</fullName>
    </alternativeName>
</protein>
<evidence type="ECO:0000255" key="1">
    <source>
        <dbReference type="HAMAP-Rule" id="MF_00310"/>
    </source>
</evidence>
<comment type="function">
    <text evidence="1">Produces ATP from ADP in the presence of a proton gradient across the membrane. The V-type beta chain is a regulatory subunit.</text>
</comment>
<comment type="similarity">
    <text evidence="1">Belongs to the ATPase alpha/beta chains family.</text>
</comment>
<name>VATB_STRZJ</name>
<accession>C1CES1</accession>
<dbReference type="EMBL" id="CP000919">
    <property type="protein sequence ID" value="ACO19032.1"/>
    <property type="molecule type" value="Genomic_DNA"/>
</dbReference>
<dbReference type="RefSeq" id="WP_000111248.1">
    <property type="nucleotide sequence ID" value="NC_012466.1"/>
</dbReference>
<dbReference type="SMR" id="C1CES1"/>
<dbReference type="KEGG" id="sjj:SPJ_1232"/>
<dbReference type="HOGENOM" id="CLU_022916_0_0_9"/>
<dbReference type="Proteomes" id="UP000002206">
    <property type="component" value="Chromosome"/>
</dbReference>
<dbReference type="GO" id="GO:0005524">
    <property type="term" value="F:ATP binding"/>
    <property type="evidence" value="ECO:0007669"/>
    <property type="project" value="UniProtKB-UniRule"/>
</dbReference>
<dbReference type="GO" id="GO:0046933">
    <property type="term" value="F:proton-transporting ATP synthase activity, rotational mechanism"/>
    <property type="evidence" value="ECO:0007669"/>
    <property type="project" value="UniProtKB-UniRule"/>
</dbReference>
<dbReference type="GO" id="GO:0042777">
    <property type="term" value="P:proton motive force-driven plasma membrane ATP synthesis"/>
    <property type="evidence" value="ECO:0007669"/>
    <property type="project" value="UniProtKB-UniRule"/>
</dbReference>
<dbReference type="CDD" id="cd18112">
    <property type="entry name" value="ATP-synt_V_A-type_beta_C"/>
    <property type="match status" value="1"/>
</dbReference>
<dbReference type="CDD" id="cd18118">
    <property type="entry name" value="ATP-synt_V_A-type_beta_N"/>
    <property type="match status" value="1"/>
</dbReference>
<dbReference type="CDD" id="cd01135">
    <property type="entry name" value="V_A-ATPase_B"/>
    <property type="match status" value="1"/>
</dbReference>
<dbReference type="Gene3D" id="3.40.50.12240">
    <property type="match status" value="1"/>
</dbReference>
<dbReference type="HAMAP" id="MF_00310">
    <property type="entry name" value="ATP_synth_B_arch"/>
    <property type="match status" value="1"/>
</dbReference>
<dbReference type="InterPro" id="IPR055190">
    <property type="entry name" value="ATP-synt_VA_C"/>
</dbReference>
<dbReference type="InterPro" id="IPR020003">
    <property type="entry name" value="ATPase_a/bsu_AS"/>
</dbReference>
<dbReference type="InterPro" id="IPR004100">
    <property type="entry name" value="ATPase_F1/V1/A1_a/bsu_N"/>
</dbReference>
<dbReference type="InterPro" id="IPR000194">
    <property type="entry name" value="ATPase_F1/V1/A1_a/bsu_nucl-bd"/>
</dbReference>
<dbReference type="InterPro" id="IPR027417">
    <property type="entry name" value="P-loop_NTPase"/>
</dbReference>
<dbReference type="InterPro" id="IPR022879">
    <property type="entry name" value="V-ATPase_su_B/beta"/>
</dbReference>
<dbReference type="NCBIfam" id="NF003235">
    <property type="entry name" value="PRK04196.1"/>
    <property type="match status" value="1"/>
</dbReference>
<dbReference type="PANTHER" id="PTHR43389">
    <property type="entry name" value="V-TYPE PROTON ATPASE SUBUNIT B"/>
    <property type="match status" value="1"/>
</dbReference>
<dbReference type="PANTHER" id="PTHR43389:SF4">
    <property type="entry name" value="V-TYPE PROTON ATPASE SUBUNIT B"/>
    <property type="match status" value="1"/>
</dbReference>
<dbReference type="Pfam" id="PF00006">
    <property type="entry name" value="ATP-synt_ab"/>
    <property type="match status" value="1"/>
</dbReference>
<dbReference type="Pfam" id="PF02874">
    <property type="entry name" value="ATP-synt_ab_N"/>
    <property type="match status" value="1"/>
</dbReference>
<dbReference type="Pfam" id="PF22919">
    <property type="entry name" value="ATP-synt_VA_C"/>
    <property type="match status" value="1"/>
</dbReference>
<dbReference type="PIRSF" id="PIRSF039114">
    <property type="entry name" value="V-ATPsynth_beta/V-ATPase_B"/>
    <property type="match status" value="1"/>
</dbReference>
<dbReference type="SUPFAM" id="SSF47917">
    <property type="entry name" value="C-terminal domain of alpha and beta subunits of F1 ATP synthase"/>
    <property type="match status" value="1"/>
</dbReference>
<dbReference type="SUPFAM" id="SSF52540">
    <property type="entry name" value="P-loop containing nucleoside triphosphate hydrolases"/>
    <property type="match status" value="1"/>
</dbReference>
<dbReference type="PROSITE" id="PS00152">
    <property type="entry name" value="ATPASE_ALPHA_BETA"/>
    <property type="match status" value="1"/>
</dbReference>
<keyword id="KW-0066">ATP synthesis</keyword>
<keyword id="KW-0375">Hydrogen ion transport</keyword>
<keyword id="KW-0406">Ion transport</keyword>
<keyword id="KW-0813">Transport</keyword>
<sequence>MSVIKEYRTASEVVGPLMIVEQVNNVSYNELVEIQLHNGEIRRGQVLEIHEDKAMVQLFEGSSGINLEKSKIRFAGHALELAVSEDMVGRIFNGMGKPIDGGPDLIPEKYLDIDGQAINPVSRDYPDEFIQTGISSIDHLNTLVRGQKLPVFSGSGLPHNELAAQIARQATVLNSDENFAVVFAAMGITFEEAEFFMEELRKTGAIDRSVLFMNLANDPAIERIATPRIALTAAEYLAFEKDMHVLVIMTDMTNYCEALREVSAARREVPGRRGYPGYLYTNLSTLYERAGRLVGKKGSVTQIPILTMPEDDITHPIPDLTGYITEGQIILSHELYNQGYRPPINVLPSLSRLKDKGSGEGKTRGDHAPTMNQLFAAYAQGKKVEELAVVLGESALSDVDKLYVRFTKRFEEEYINQGFYKNRNIEDTLNLGWELLSILPRTELKRIKDDLLDKYLPLVEV</sequence>